<organism>
    <name type="scientific">Rhizobium johnstonii (strain DSM 114642 / LMG 32736 / 3841)</name>
    <name type="common">Rhizobium leguminosarum bv. viciae</name>
    <dbReference type="NCBI Taxonomy" id="216596"/>
    <lineage>
        <taxon>Bacteria</taxon>
        <taxon>Pseudomonadati</taxon>
        <taxon>Pseudomonadota</taxon>
        <taxon>Alphaproteobacteria</taxon>
        <taxon>Hyphomicrobiales</taxon>
        <taxon>Rhizobiaceae</taxon>
        <taxon>Rhizobium/Agrobacterium group</taxon>
        <taxon>Rhizobium</taxon>
        <taxon>Rhizobium johnstonii</taxon>
    </lineage>
</organism>
<sequence length="229" mass="25125">MIQTTFPDRAVMAELLAKMLWEIKAVHFNAAQPYKLSSGMASPVYIDCRKLLSFPRIRSTVMDFAASTLLRDAGFEQFDCIAGGETAGIPFAALLADRLSLPMIYVRKQPKGHGRNAQIEGNMPEGSRVLVIEDLTTAGGSMFKFIDAIRAAGGIVDHGIALFFYGIFGEERFADGKVRLHHIATWRNVLAVAKEQKLFDDKTLSEVEAFLDAPLAWSGRNGGVSELSL</sequence>
<reference key="1">
    <citation type="journal article" date="2006" name="Genome Biol.">
        <title>The genome of Rhizobium leguminosarum has recognizable core and accessory components.</title>
        <authorList>
            <person name="Young J.P.W."/>
            <person name="Crossman L.C."/>
            <person name="Johnston A.W.B."/>
            <person name="Thomson N.R."/>
            <person name="Ghazoui Z.F."/>
            <person name="Hull K.H."/>
            <person name="Wexler M."/>
            <person name="Curson A.R.J."/>
            <person name="Todd J.D."/>
            <person name="Poole P.S."/>
            <person name="Mauchline T.H."/>
            <person name="East A.K."/>
            <person name="Quail M.A."/>
            <person name="Churcher C."/>
            <person name="Arrowsmith C."/>
            <person name="Cherevach I."/>
            <person name="Chillingworth T."/>
            <person name="Clarke K."/>
            <person name="Cronin A."/>
            <person name="Davis P."/>
            <person name="Fraser A."/>
            <person name="Hance Z."/>
            <person name="Hauser H."/>
            <person name="Jagels K."/>
            <person name="Moule S."/>
            <person name="Mungall K."/>
            <person name="Norbertczak H."/>
            <person name="Rabbinowitsch E."/>
            <person name="Sanders M."/>
            <person name="Simmonds M."/>
            <person name="Whitehead S."/>
            <person name="Parkhill J."/>
        </authorList>
    </citation>
    <scope>NUCLEOTIDE SEQUENCE [LARGE SCALE GENOMIC DNA]</scope>
    <source>
        <strain>DSM 114642 / LMG 32736 / 3841</strain>
    </source>
</reference>
<accession>Q1MM09</accession>
<gene>
    <name evidence="1" type="primary">pyrE</name>
    <name type="ordered locus">RL0501</name>
</gene>
<keyword id="KW-0328">Glycosyltransferase</keyword>
<keyword id="KW-0460">Magnesium</keyword>
<keyword id="KW-0665">Pyrimidine biosynthesis</keyword>
<keyword id="KW-0808">Transferase</keyword>
<evidence type="ECO:0000255" key="1">
    <source>
        <dbReference type="HAMAP-Rule" id="MF_01208"/>
    </source>
</evidence>
<proteinExistence type="inferred from homology"/>
<comment type="function">
    <text evidence="1">Catalyzes the transfer of a ribosyl phosphate group from 5-phosphoribose 1-diphosphate to orotate, leading to the formation of orotidine monophosphate (OMP).</text>
</comment>
<comment type="catalytic activity">
    <reaction evidence="1">
        <text>orotidine 5'-phosphate + diphosphate = orotate + 5-phospho-alpha-D-ribose 1-diphosphate</text>
        <dbReference type="Rhea" id="RHEA:10380"/>
        <dbReference type="ChEBI" id="CHEBI:30839"/>
        <dbReference type="ChEBI" id="CHEBI:33019"/>
        <dbReference type="ChEBI" id="CHEBI:57538"/>
        <dbReference type="ChEBI" id="CHEBI:58017"/>
        <dbReference type="EC" id="2.4.2.10"/>
    </reaction>
</comment>
<comment type="cofactor">
    <cofactor evidence="1">
        <name>Mg(2+)</name>
        <dbReference type="ChEBI" id="CHEBI:18420"/>
    </cofactor>
</comment>
<comment type="pathway">
    <text evidence="1">Pyrimidine metabolism; UMP biosynthesis via de novo pathway; UMP from orotate: step 1/2.</text>
</comment>
<comment type="subunit">
    <text evidence="1">Homodimer.</text>
</comment>
<comment type="similarity">
    <text evidence="1">Belongs to the purine/pyrimidine phosphoribosyltransferase family. PyrE subfamily.</text>
</comment>
<dbReference type="EC" id="2.4.2.10" evidence="1"/>
<dbReference type="EMBL" id="AM236080">
    <property type="protein sequence ID" value="CAK05994.1"/>
    <property type="molecule type" value="Genomic_DNA"/>
</dbReference>
<dbReference type="RefSeq" id="WP_011650291.1">
    <property type="nucleotide sequence ID" value="NC_008380.1"/>
</dbReference>
<dbReference type="SMR" id="Q1MM09"/>
<dbReference type="EnsemblBacteria" id="CAK05994">
    <property type="protein sequence ID" value="CAK05994"/>
    <property type="gene ID" value="RL0501"/>
</dbReference>
<dbReference type="KEGG" id="rle:RL0501"/>
<dbReference type="eggNOG" id="COG0461">
    <property type="taxonomic scope" value="Bacteria"/>
</dbReference>
<dbReference type="HOGENOM" id="CLU_074878_1_0_5"/>
<dbReference type="UniPathway" id="UPA00070">
    <property type="reaction ID" value="UER00119"/>
</dbReference>
<dbReference type="Proteomes" id="UP000006575">
    <property type="component" value="Chromosome"/>
</dbReference>
<dbReference type="GO" id="GO:0000287">
    <property type="term" value="F:magnesium ion binding"/>
    <property type="evidence" value="ECO:0007669"/>
    <property type="project" value="UniProtKB-UniRule"/>
</dbReference>
<dbReference type="GO" id="GO:0004588">
    <property type="term" value="F:orotate phosphoribosyltransferase activity"/>
    <property type="evidence" value="ECO:0007669"/>
    <property type="project" value="UniProtKB-UniRule"/>
</dbReference>
<dbReference type="GO" id="GO:0044205">
    <property type="term" value="P:'de novo' UMP biosynthetic process"/>
    <property type="evidence" value="ECO:0007669"/>
    <property type="project" value="UniProtKB-UniRule"/>
</dbReference>
<dbReference type="GO" id="GO:0019856">
    <property type="term" value="P:pyrimidine nucleobase biosynthetic process"/>
    <property type="evidence" value="ECO:0007669"/>
    <property type="project" value="TreeGrafter"/>
</dbReference>
<dbReference type="CDD" id="cd06223">
    <property type="entry name" value="PRTases_typeI"/>
    <property type="match status" value="1"/>
</dbReference>
<dbReference type="Gene3D" id="3.40.50.2020">
    <property type="match status" value="1"/>
</dbReference>
<dbReference type="HAMAP" id="MF_01208">
    <property type="entry name" value="PyrE"/>
    <property type="match status" value="1"/>
</dbReference>
<dbReference type="InterPro" id="IPR023031">
    <property type="entry name" value="OPRT"/>
</dbReference>
<dbReference type="InterPro" id="IPR004467">
    <property type="entry name" value="Or_phspho_trans_dom"/>
</dbReference>
<dbReference type="InterPro" id="IPR000836">
    <property type="entry name" value="PRibTrfase_dom"/>
</dbReference>
<dbReference type="InterPro" id="IPR029057">
    <property type="entry name" value="PRTase-like"/>
</dbReference>
<dbReference type="NCBIfam" id="NF001729">
    <property type="entry name" value="PRK00455.1-3"/>
    <property type="match status" value="1"/>
</dbReference>
<dbReference type="NCBIfam" id="TIGR00336">
    <property type="entry name" value="pyrE"/>
    <property type="match status" value="1"/>
</dbReference>
<dbReference type="PANTHER" id="PTHR19278">
    <property type="entry name" value="OROTATE PHOSPHORIBOSYLTRANSFERASE"/>
    <property type="match status" value="1"/>
</dbReference>
<dbReference type="PANTHER" id="PTHR19278:SF9">
    <property type="entry name" value="URIDINE 5'-MONOPHOSPHATE SYNTHASE"/>
    <property type="match status" value="1"/>
</dbReference>
<dbReference type="Pfam" id="PF00156">
    <property type="entry name" value="Pribosyltran"/>
    <property type="match status" value="1"/>
</dbReference>
<dbReference type="SUPFAM" id="SSF53271">
    <property type="entry name" value="PRTase-like"/>
    <property type="match status" value="1"/>
</dbReference>
<protein>
    <recommendedName>
        <fullName evidence="1">Orotate phosphoribosyltransferase</fullName>
        <shortName evidence="1">OPRT</shortName>
        <shortName evidence="1">OPRTase</shortName>
        <ecNumber evidence="1">2.4.2.10</ecNumber>
    </recommendedName>
</protein>
<name>PYRE_RHIJ3</name>
<feature type="chain" id="PRO_1000066281" description="Orotate phosphoribosyltransferase">
    <location>
        <begin position="1"/>
        <end position="229"/>
    </location>
</feature>
<feature type="binding site" evidence="1">
    <location>
        <position position="107"/>
    </location>
    <ligand>
        <name>5-phospho-alpha-D-ribose 1-diphosphate</name>
        <dbReference type="ChEBI" id="CHEBI:58017"/>
        <note>ligand shared between dimeric partners</note>
    </ligand>
</feature>
<feature type="binding site" description="in other chain" evidence="1">
    <location>
        <position position="108"/>
    </location>
    <ligand>
        <name>5-phospho-alpha-D-ribose 1-diphosphate</name>
        <dbReference type="ChEBI" id="CHEBI:58017"/>
        <note>ligand shared between dimeric partners</note>
    </ligand>
</feature>
<feature type="binding site" evidence="1">
    <location>
        <position position="111"/>
    </location>
    <ligand>
        <name>5-phospho-alpha-D-ribose 1-diphosphate</name>
        <dbReference type="ChEBI" id="CHEBI:58017"/>
        <note>ligand shared between dimeric partners</note>
    </ligand>
</feature>
<feature type="binding site" evidence="1">
    <location>
        <position position="113"/>
    </location>
    <ligand>
        <name>5-phospho-alpha-D-ribose 1-diphosphate</name>
        <dbReference type="ChEBI" id="CHEBI:58017"/>
        <note>ligand shared between dimeric partners</note>
    </ligand>
</feature>
<feature type="binding site" description="in other chain" evidence="1">
    <location>
        <begin position="133"/>
        <end position="141"/>
    </location>
    <ligand>
        <name>5-phospho-alpha-D-ribose 1-diphosphate</name>
        <dbReference type="ChEBI" id="CHEBI:58017"/>
        <note>ligand shared between dimeric partners</note>
    </ligand>
</feature>
<feature type="binding site" evidence="1">
    <location>
        <position position="137"/>
    </location>
    <ligand>
        <name>orotate</name>
        <dbReference type="ChEBI" id="CHEBI:30839"/>
    </ligand>
</feature>